<accession>Q839G5</accession>
<gene>
    <name evidence="1" type="primary">rpsJ</name>
    <name type="ordered locus">EF_0205</name>
</gene>
<proteinExistence type="evidence at protein level"/>
<name>RS10_ENTFA</name>
<keyword id="KW-0002">3D-structure</keyword>
<keyword id="KW-1185">Reference proteome</keyword>
<keyword id="KW-0687">Ribonucleoprotein</keyword>
<keyword id="KW-0689">Ribosomal protein</keyword>
<protein>
    <recommendedName>
        <fullName evidence="1">Small ribosomal subunit protein uS10</fullName>
    </recommendedName>
    <alternativeName>
        <fullName evidence="2">30S ribosomal protein S10</fullName>
    </alternativeName>
</protein>
<dbReference type="EMBL" id="AE016830">
    <property type="protein sequence ID" value="AAO80074.1"/>
    <property type="molecule type" value="Genomic_DNA"/>
</dbReference>
<dbReference type="RefSeq" id="NP_814003.1">
    <property type="nucleotide sequence ID" value="NC_004668.1"/>
</dbReference>
<dbReference type="RefSeq" id="WP_002389727.1">
    <property type="nucleotide sequence ID" value="NZ_KE136524.1"/>
</dbReference>
<dbReference type="PDB" id="6WUA">
    <property type="method" value="EM"/>
    <property type="resolution" value="3.20 A"/>
    <property type="chains" value="j=4-102"/>
</dbReference>
<dbReference type="PDB" id="7P7Q">
    <property type="method" value="EM"/>
    <property type="resolution" value="2.40 A"/>
    <property type="chains" value="k=1-102"/>
</dbReference>
<dbReference type="PDB" id="7P7R">
    <property type="method" value="EM"/>
    <property type="resolution" value="2.90 A"/>
    <property type="chains" value="k=1-102"/>
</dbReference>
<dbReference type="PDBsum" id="6WUA"/>
<dbReference type="PDBsum" id="7P7Q"/>
<dbReference type="PDBsum" id="7P7R"/>
<dbReference type="EMDB" id="EMD-13241"/>
<dbReference type="EMDB" id="EMD-13242"/>
<dbReference type="SMR" id="Q839G5"/>
<dbReference type="STRING" id="226185.EF_0205"/>
<dbReference type="EnsemblBacteria" id="AAO80074">
    <property type="protein sequence ID" value="AAO80074"/>
    <property type="gene ID" value="EF_0205"/>
</dbReference>
<dbReference type="GeneID" id="60892700"/>
<dbReference type="KEGG" id="efa:EF0205"/>
<dbReference type="PATRIC" id="fig|226185.45.peg.61"/>
<dbReference type="eggNOG" id="COG0051">
    <property type="taxonomic scope" value="Bacteria"/>
</dbReference>
<dbReference type="HOGENOM" id="CLU_122625_1_3_9"/>
<dbReference type="Proteomes" id="UP000001415">
    <property type="component" value="Chromosome"/>
</dbReference>
<dbReference type="GO" id="GO:1990904">
    <property type="term" value="C:ribonucleoprotein complex"/>
    <property type="evidence" value="ECO:0007669"/>
    <property type="project" value="UniProtKB-KW"/>
</dbReference>
<dbReference type="GO" id="GO:0005840">
    <property type="term" value="C:ribosome"/>
    <property type="evidence" value="ECO:0007669"/>
    <property type="project" value="UniProtKB-KW"/>
</dbReference>
<dbReference type="GO" id="GO:0003735">
    <property type="term" value="F:structural constituent of ribosome"/>
    <property type="evidence" value="ECO:0007669"/>
    <property type="project" value="InterPro"/>
</dbReference>
<dbReference type="GO" id="GO:0000049">
    <property type="term" value="F:tRNA binding"/>
    <property type="evidence" value="ECO:0007669"/>
    <property type="project" value="UniProtKB-UniRule"/>
</dbReference>
<dbReference type="GO" id="GO:0006412">
    <property type="term" value="P:translation"/>
    <property type="evidence" value="ECO:0007669"/>
    <property type="project" value="UniProtKB-UniRule"/>
</dbReference>
<dbReference type="FunFam" id="3.30.70.600:FF:000001">
    <property type="entry name" value="30S ribosomal protein S10"/>
    <property type="match status" value="1"/>
</dbReference>
<dbReference type="Gene3D" id="3.30.70.600">
    <property type="entry name" value="Ribosomal protein S10 domain"/>
    <property type="match status" value="1"/>
</dbReference>
<dbReference type="HAMAP" id="MF_00508">
    <property type="entry name" value="Ribosomal_uS10"/>
    <property type="match status" value="1"/>
</dbReference>
<dbReference type="InterPro" id="IPR001848">
    <property type="entry name" value="Ribosomal_uS10"/>
</dbReference>
<dbReference type="InterPro" id="IPR018268">
    <property type="entry name" value="Ribosomal_uS10_CS"/>
</dbReference>
<dbReference type="InterPro" id="IPR027486">
    <property type="entry name" value="Ribosomal_uS10_dom"/>
</dbReference>
<dbReference type="InterPro" id="IPR036838">
    <property type="entry name" value="Ribosomal_uS10_dom_sf"/>
</dbReference>
<dbReference type="NCBIfam" id="NF001861">
    <property type="entry name" value="PRK00596.1"/>
    <property type="match status" value="1"/>
</dbReference>
<dbReference type="NCBIfam" id="TIGR01049">
    <property type="entry name" value="rpsJ_bact"/>
    <property type="match status" value="1"/>
</dbReference>
<dbReference type="PANTHER" id="PTHR11700">
    <property type="entry name" value="30S RIBOSOMAL PROTEIN S10 FAMILY MEMBER"/>
    <property type="match status" value="1"/>
</dbReference>
<dbReference type="Pfam" id="PF00338">
    <property type="entry name" value="Ribosomal_S10"/>
    <property type="match status" value="1"/>
</dbReference>
<dbReference type="PRINTS" id="PR00971">
    <property type="entry name" value="RIBOSOMALS10"/>
</dbReference>
<dbReference type="SMART" id="SM01403">
    <property type="entry name" value="Ribosomal_S10"/>
    <property type="match status" value="1"/>
</dbReference>
<dbReference type="SUPFAM" id="SSF54999">
    <property type="entry name" value="Ribosomal protein S10"/>
    <property type="match status" value="1"/>
</dbReference>
<dbReference type="PROSITE" id="PS00361">
    <property type="entry name" value="RIBOSOMAL_S10"/>
    <property type="match status" value="1"/>
</dbReference>
<comment type="function">
    <text evidence="1">Involved in the binding of tRNA to the ribosomes.</text>
</comment>
<comment type="subunit">
    <text evidence="1">Part of the 30S ribosomal subunit.</text>
</comment>
<comment type="similarity">
    <text evidence="1">Belongs to the universal ribosomal protein uS10 family.</text>
</comment>
<sequence length="102" mass="11709">MAKQKIRIRLKAYEHRILDQSADKIVETAKRTGADVSGPIPLPTERSLYTVIRATHKYKDSREQFEMRTHKRLIDIVNPTPKTVDALMKLDLPSGVNIEIKL</sequence>
<organism>
    <name type="scientific">Enterococcus faecalis (strain ATCC 700802 / V583)</name>
    <dbReference type="NCBI Taxonomy" id="226185"/>
    <lineage>
        <taxon>Bacteria</taxon>
        <taxon>Bacillati</taxon>
        <taxon>Bacillota</taxon>
        <taxon>Bacilli</taxon>
        <taxon>Lactobacillales</taxon>
        <taxon>Enterococcaceae</taxon>
        <taxon>Enterococcus</taxon>
    </lineage>
</organism>
<feature type="chain" id="PRO_0000146532" description="Small ribosomal subunit protein uS10">
    <location>
        <begin position="1"/>
        <end position="102"/>
    </location>
</feature>
<feature type="strand" evidence="3">
    <location>
        <begin position="7"/>
        <end position="13"/>
    </location>
</feature>
<feature type="helix" evidence="3">
    <location>
        <begin position="15"/>
        <end position="30"/>
    </location>
</feature>
<feature type="strand" evidence="3">
    <location>
        <begin position="40"/>
        <end position="52"/>
    </location>
</feature>
<feature type="strand" evidence="3">
    <location>
        <begin position="54"/>
        <end position="57"/>
    </location>
</feature>
<feature type="strand" evidence="3">
    <location>
        <begin position="62"/>
        <end position="76"/>
    </location>
</feature>
<feature type="helix" evidence="3">
    <location>
        <begin position="83"/>
        <end position="88"/>
    </location>
</feature>
<reference key="1">
    <citation type="journal article" date="2003" name="Science">
        <title>Role of mobile DNA in the evolution of vancomycin-resistant Enterococcus faecalis.</title>
        <authorList>
            <person name="Paulsen I.T."/>
            <person name="Banerjei L."/>
            <person name="Myers G.S.A."/>
            <person name="Nelson K.E."/>
            <person name="Seshadri R."/>
            <person name="Read T.D."/>
            <person name="Fouts D.E."/>
            <person name="Eisen J.A."/>
            <person name="Gill S.R."/>
            <person name="Heidelberg J.F."/>
            <person name="Tettelin H."/>
            <person name="Dodson R.J."/>
            <person name="Umayam L.A."/>
            <person name="Brinkac L.M."/>
            <person name="Beanan M.J."/>
            <person name="Daugherty S.C."/>
            <person name="DeBoy R.T."/>
            <person name="Durkin S.A."/>
            <person name="Kolonay J.F."/>
            <person name="Madupu R."/>
            <person name="Nelson W.C."/>
            <person name="Vamathevan J.J."/>
            <person name="Tran B."/>
            <person name="Upton J."/>
            <person name="Hansen T."/>
            <person name="Shetty J."/>
            <person name="Khouri H.M."/>
            <person name="Utterback T.R."/>
            <person name="Radune D."/>
            <person name="Ketchum K.A."/>
            <person name="Dougherty B.A."/>
            <person name="Fraser C.M."/>
        </authorList>
    </citation>
    <scope>NUCLEOTIDE SEQUENCE [LARGE SCALE GENOMIC DNA]</scope>
    <source>
        <strain>ATCC 700802 / V583</strain>
    </source>
</reference>
<evidence type="ECO:0000255" key="1">
    <source>
        <dbReference type="HAMAP-Rule" id="MF_00508"/>
    </source>
</evidence>
<evidence type="ECO:0000305" key="2"/>
<evidence type="ECO:0007829" key="3">
    <source>
        <dbReference type="PDB" id="6WUA"/>
    </source>
</evidence>